<gene>
    <name type="primary">MT-CYB</name>
    <name type="synonym">COB</name>
    <name type="synonym">CYTB</name>
    <name type="synonym">MTCYB</name>
</gene>
<proteinExistence type="inferred from homology"/>
<keyword id="KW-0249">Electron transport</keyword>
<keyword id="KW-0349">Heme</keyword>
<keyword id="KW-0408">Iron</keyword>
<keyword id="KW-0472">Membrane</keyword>
<keyword id="KW-0479">Metal-binding</keyword>
<keyword id="KW-0496">Mitochondrion</keyword>
<keyword id="KW-0999">Mitochondrion inner membrane</keyword>
<keyword id="KW-0679">Respiratory chain</keyword>
<keyword id="KW-0812">Transmembrane</keyword>
<keyword id="KW-1133">Transmembrane helix</keyword>
<keyword id="KW-0813">Transport</keyword>
<keyword id="KW-0830">Ubiquinone</keyword>
<reference key="1">
    <citation type="thesis" date="1997" institute="Queen's University / Kingston" country="Canada">
        <title>Hic Sunt Serpentes -- molecular phylogenetics and the Boidae (Serpentes: Booidea).</title>
        <authorList>
            <person name="Campbell B.N."/>
        </authorList>
    </citation>
    <scope>NUCLEOTIDE SEQUENCE [GENOMIC DNA]</scope>
</reference>
<geneLocation type="mitochondrion"/>
<dbReference type="EMBL" id="U69821">
    <property type="protein sequence ID" value="AAC01834.1"/>
    <property type="molecule type" value="Genomic_DNA"/>
</dbReference>
<dbReference type="GO" id="GO:0005743">
    <property type="term" value="C:mitochondrial inner membrane"/>
    <property type="evidence" value="ECO:0007669"/>
    <property type="project" value="UniProtKB-SubCell"/>
</dbReference>
<dbReference type="GO" id="GO:0046872">
    <property type="term" value="F:metal ion binding"/>
    <property type="evidence" value="ECO:0007669"/>
    <property type="project" value="UniProtKB-KW"/>
</dbReference>
<dbReference type="GO" id="GO:0008121">
    <property type="term" value="F:ubiquinol-cytochrome-c reductase activity"/>
    <property type="evidence" value="ECO:0007669"/>
    <property type="project" value="TreeGrafter"/>
</dbReference>
<dbReference type="GO" id="GO:0006122">
    <property type="term" value="P:mitochondrial electron transport, ubiquinol to cytochrome c"/>
    <property type="evidence" value="ECO:0007669"/>
    <property type="project" value="TreeGrafter"/>
</dbReference>
<dbReference type="CDD" id="cd00290">
    <property type="entry name" value="cytochrome_b_C"/>
    <property type="match status" value="1"/>
</dbReference>
<dbReference type="Gene3D" id="1.20.810.10">
    <property type="entry name" value="Cytochrome Bc1 Complex, Chain C"/>
    <property type="match status" value="2"/>
</dbReference>
<dbReference type="InterPro" id="IPR005798">
    <property type="entry name" value="Cyt_b/b6_C"/>
</dbReference>
<dbReference type="InterPro" id="IPR036150">
    <property type="entry name" value="Cyt_b/b6_C_sf"/>
</dbReference>
<dbReference type="InterPro" id="IPR005797">
    <property type="entry name" value="Cyt_b/b6_N"/>
</dbReference>
<dbReference type="InterPro" id="IPR027387">
    <property type="entry name" value="Cytb/b6-like_sf"/>
</dbReference>
<dbReference type="InterPro" id="IPR048260">
    <property type="entry name" value="Cytochrome_b_C_euk/bac"/>
</dbReference>
<dbReference type="InterPro" id="IPR016174">
    <property type="entry name" value="Di-haem_cyt_TM"/>
</dbReference>
<dbReference type="PANTHER" id="PTHR19271">
    <property type="entry name" value="CYTOCHROME B"/>
    <property type="match status" value="1"/>
</dbReference>
<dbReference type="PANTHER" id="PTHR19271:SF16">
    <property type="entry name" value="CYTOCHROME B"/>
    <property type="match status" value="1"/>
</dbReference>
<dbReference type="Pfam" id="PF00032">
    <property type="entry name" value="Cytochrom_B_C"/>
    <property type="match status" value="1"/>
</dbReference>
<dbReference type="Pfam" id="PF13631">
    <property type="entry name" value="Cytochrom_B_N_2"/>
    <property type="match status" value="1"/>
</dbReference>
<dbReference type="Pfam" id="PF00033">
    <property type="entry name" value="Cytochrome_B"/>
    <property type="match status" value="1"/>
</dbReference>
<dbReference type="SUPFAM" id="SSF81648">
    <property type="entry name" value="a domain/subunit of cytochrome bc1 complex (Ubiquinol-cytochrome c reductase)"/>
    <property type="match status" value="1"/>
</dbReference>
<dbReference type="SUPFAM" id="SSF81342">
    <property type="entry name" value="Transmembrane di-heme cytochromes"/>
    <property type="match status" value="1"/>
</dbReference>
<dbReference type="PROSITE" id="PS51003">
    <property type="entry name" value="CYTB_CTER"/>
    <property type="match status" value="1"/>
</dbReference>
<dbReference type="PROSITE" id="PS51002">
    <property type="entry name" value="CYTB_NTER"/>
    <property type="match status" value="1"/>
</dbReference>
<name>CYB_ERYJA</name>
<comment type="function">
    <text evidence="2">Component of the ubiquinol-cytochrome c reductase complex (complex III or cytochrome b-c1 complex) that is part of the mitochondrial respiratory chain. The b-c1 complex mediates electron transfer from ubiquinol to cytochrome c. Contributes to the generation of a proton gradient across the mitochondrial membrane that is then used for ATP synthesis.</text>
</comment>
<comment type="cofactor">
    <cofactor evidence="2">
        <name>heme b</name>
        <dbReference type="ChEBI" id="CHEBI:60344"/>
    </cofactor>
    <text evidence="2">Binds 2 heme b groups non-covalently.</text>
</comment>
<comment type="subunit">
    <text evidence="2">The cytochrome bc1 complex contains 3 respiratory subunits (MT-CYB, CYC1 and UQCRFS1), 2 core proteins (UQCRC1 and UQCRC2) and probably 6 low-molecular weight proteins.</text>
</comment>
<comment type="subcellular location">
    <subcellularLocation>
        <location evidence="2">Mitochondrion inner membrane</location>
        <topology evidence="2">Multi-pass membrane protein</topology>
    </subcellularLocation>
</comment>
<comment type="miscellaneous">
    <text evidence="1">Heme 1 (or BL or b562) is low-potential and absorbs at about 562 nm, and heme 2 (or BH or b566) is high-potential and absorbs at about 566 nm.</text>
</comment>
<comment type="similarity">
    <text evidence="3 4">Belongs to the cytochrome b family.</text>
</comment>
<comment type="caution">
    <text evidence="2">The full-length protein contains only eight transmembrane helices, not nine as predicted by bioinformatics tools.</text>
</comment>
<accession>O48076</accession>
<feature type="chain" id="PRO_0000060945" description="Cytochrome b">
    <location>
        <begin position="1"/>
        <end position="371"/>
    </location>
</feature>
<feature type="transmembrane region" description="Helical" evidence="2">
    <location>
        <begin position="25"/>
        <end position="45"/>
    </location>
</feature>
<feature type="transmembrane region" description="Helical" evidence="2">
    <location>
        <begin position="69"/>
        <end position="90"/>
    </location>
</feature>
<feature type="transmembrane region" description="Helical" evidence="2">
    <location>
        <begin position="105"/>
        <end position="125"/>
    </location>
</feature>
<feature type="transmembrane region" description="Helical" evidence="2">
    <location>
        <begin position="170"/>
        <end position="190"/>
    </location>
</feature>
<feature type="transmembrane region" description="Helical" evidence="2">
    <location>
        <begin position="218"/>
        <end position="238"/>
    </location>
</feature>
<feature type="transmembrane region" description="Helical" evidence="2">
    <location>
        <begin position="280"/>
        <end position="300"/>
    </location>
</feature>
<feature type="transmembrane region" description="Helical" evidence="2">
    <location>
        <begin position="312"/>
        <end position="332"/>
    </location>
</feature>
<feature type="transmembrane region" description="Helical" evidence="2">
    <location>
        <begin position="339"/>
        <end position="358"/>
    </location>
</feature>
<feature type="binding site" description="axial binding residue" evidence="2">
    <location>
        <position position="75"/>
    </location>
    <ligand>
        <name>heme b</name>
        <dbReference type="ChEBI" id="CHEBI:60344"/>
        <label>b562</label>
    </ligand>
    <ligandPart>
        <name>Fe</name>
        <dbReference type="ChEBI" id="CHEBI:18248"/>
    </ligandPart>
</feature>
<feature type="binding site" description="axial binding residue" evidence="2">
    <location>
        <position position="89"/>
    </location>
    <ligand>
        <name>heme b</name>
        <dbReference type="ChEBI" id="CHEBI:60344"/>
        <label>b566</label>
    </ligand>
    <ligandPart>
        <name>Fe</name>
        <dbReference type="ChEBI" id="CHEBI:18248"/>
    </ligandPart>
</feature>
<feature type="binding site" description="axial binding residue" evidence="2">
    <location>
        <position position="174"/>
    </location>
    <ligand>
        <name>heme b</name>
        <dbReference type="ChEBI" id="CHEBI:60344"/>
        <label>b562</label>
    </ligand>
    <ligandPart>
        <name>Fe</name>
        <dbReference type="ChEBI" id="CHEBI:18248"/>
    </ligandPart>
</feature>
<feature type="binding site" description="axial binding residue" evidence="2">
    <location>
        <position position="188"/>
    </location>
    <ligand>
        <name>heme b</name>
        <dbReference type="ChEBI" id="CHEBI:60344"/>
        <label>b566</label>
    </ligand>
    <ligandPart>
        <name>Fe</name>
        <dbReference type="ChEBI" id="CHEBI:18248"/>
    </ligandPart>
</feature>
<feature type="binding site" evidence="2">
    <location>
        <position position="193"/>
    </location>
    <ligand>
        <name>a ubiquinone</name>
        <dbReference type="ChEBI" id="CHEBI:16389"/>
    </ligand>
</feature>
<evidence type="ECO:0000250" key="1"/>
<evidence type="ECO:0000250" key="2">
    <source>
        <dbReference type="UniProtKB" id="P00157"/>
    </source>
</evidence>
<evidence type="ECO:0000255" key="3">
    <source>
        <dbReference type="PROSITE-ProRule" id="PRU00967"/>
    </source>
</evidence>
<evidence type="ECO:0000255" key="4">
    <source>
        <dbReference type="PROSITE-ProRule" id="PRU00968"/>
    </source>
</evidence>
<organism>
    <name type="scientific">Eryx jaculus</name>
    <name type="common">Javelin sand boa</name>
    <dbReference type="NCBI Taxonomy" id="51869"/>
    <lineage>
        <taxon>Eukaryota</taxon>
        <taxon>Metazoa</taxon>
        <taxon>Chordata</taxon>
        <taxon>Craniata</taxon>
        <taxon>Vertebrata</taxon>
        <taxon>Euteleostomi</taxon>
        <taxon>Lepidosauria</taxon>
        <taxon>Squamata</taxon>
        <taxon>Bifurcata</taxon>
        <taxon>Unidentata</taxon>
        <taxon>Episquamata</taxon>
        <taxon>Toxicofera</taxon>
        <taxon>Serpentes</taxon>
        <taxon>Henophidia</taxon>
        <taxon>Boidae</taxon>
        <taxon>Erycinae</taxon>
        <taxon>Eryx</taxon>
    </lineage>
</organism>
<sequence>MPHQQMLILFGLLPVATNISTWWNFGSMLLACSSMQVLTGFFLAVHYTANINLAFSSIVHITRDVPYGWMMQNLHAIGASMFFICIYIHIARGLYYGSYLNKKTWLSGTTLLIMLMATAXXXXXXXXXXXXXXXXXXXXXXXXXXXXXXXXXXXXXXXXXXXXXXXXXXXXXXXXILPFGIISLSSLHIMLLHEDGSSNPLGTNSDIDKIPFHPYHTYKDLLMLSLMVLTLLMTVSFLPDIFNDPDNFSKANPLVTPQHIKPEWYFLFAYGILRSVPNKLGGALALAMSIMILLTTPFTHTSTIRSMTFRPIMQLMFWTLVATFVVITWAATKPVEPPFTMISQVASTMYFLFFITNPITGLVENKIMKYN</sequence>
<protein>
    <recommendedName>
        <fullName>Cytochrome b</fullName>
    </recommendedName>
    <alternativeName>
        <fullName>Complex III subunit 3</fullName>
    </alternativeName>
    <alternativeName>
        <fullName>Complex III subunit III</fullName>
    </alternativeName>
    <alternativeName>
        <fullName>Cytochrome b-c1 complex subunit 3</fullName>
    </alternativeName>
    <alternativeName>
        <fullName>Ubiquinol-cytochrome-c reductase complex cytochrome b subunit</fullName>
    </alternativeName>
</protein>